<gene>
    <name type="primary">Acly</name>
</gene>
<dbReference type="EC" id="2.3.3.8" evidence="6"/>
<dbReference type="EMBL" id="AF332052">
    <property type="protein sequence ID" value="AAK56081.1"/>
    <property type="molecule type" value="mRNA"/>
</dbReference>
<dbReference type="EMBL" id="AF332051">
    <property type="protein sequence ID" value="AAK56080.1"/>
    <property type="molecule type" value="mRNA"/>
</dbReference>
<dbReference type="EMBL" id="BC056378">
    <property type="protein sequence ID" value="AAH56378.1"/>
    <property type="molecule type" value="mRNA"/>
</dbReference>
<dbReference type="CCDS" id="CCDS25425.1"/>
<dbReference type="RefSeq" id="NP_598798.1">
    <property type="nucleotide sequence ID" value="NM_134037.3"/>
</dbReference>
<dbReference type="SMR" id="Q91V92"/>
<dbReference type="BioGRID" id="222369">
    <property type="interactions" value="25"/>
</dbReference>
<dbReference type="FunCoup" id="Q91V92">
    <property type="interactions" value="4225"/>
</dbReference>
<dbReference type="IntAct" id="Q91V92">
    <property type="interactions" value="3"/>
</dbReference>
<dbReference type="MINT" id="Q91V92"/>
<dbReference type="STRING" id="10090.ENSMUSP00000103012"/>
<dbReference type="ChEMBL" id="CHEMBL3264"/>
<dbReference type="SwissLipids" id="SLP:000001386"/>
<dbReference type="GlyGen" id="Q91V92">
    <property type="glycosylation" value="3 sites, 1 O-linked glycan (1 site)"/>
</dbReference>
<dbReference type="iPTMnet" id="Q91V92"/>
<dbReference type="MetOSite" id="Q91V92"/>
<dbReference type="PhosphoSitePlus" id="Q91V92"/>
<dbReference type="SwissPalm" id="Q91V92"/>
<dbReference type="jPOST" id="Q91V92"/>
<dbReference type="PaxDb" id="10090-ENSMUSP00000103012"/>
<dbReference type="PeptideAtlas" id="Q91V92"/>
<dbReference type="ProteomicsDB" id="285643"/>
<dbReference type="Pumba" id="Q91V92"/>
<dbReference type="Antibodypedia" id="3578">
    <property type="antibodies" value="567 antibodies from 37 providers"/>
</dbReference>
<dbReference type="DNASU" id="104112"/>
<dbReference type="Ensembl" id="ENSMUST00000007131.16">
    <property type="protein sequence ID" value="ENSMUSP00000007131.10"/>
    <property type="gene ID" value="ENSMUSG00000020917.18"/>
</dbReference>
<dbReference type="Ensembl" id="ENSMUST00000165111.8">
    <property type="protein sequence ID" value="ENSMUSP00000127632.2"/>
    <property type="gene ID" value="ENSMUSG00000020917.18"/>
</dbReference>
<dbReference type="GeneID" id="104112"/>
<dbReference type="KEGG" id="mmu:104112"/>
<dbReference type="UCSC" id="uc007lll.2">
    <property type="organism name" value="mouse"/>
</dbReference>
<dbReference type="AGR" id="MGI:103251"/>
<dbReference type="CTD" id="47"/>
<dbReference type="MGI" id="MGI:103251">
    <property type="gene designation" value="Acly"/>
</dbReference>
<dbReference type="VEuPathDB" id="HostDB:ENSMUSG00000020917"/>
<dbReference type="eggNOG" id="KOG1254">
    <property type="taxonomic scope" value="Eukaryota"/>
</dbReference>
<dbReference type="GeneTree" id="ENSGT00940000154881"/>
<dbReference type="HOGENOM" id="CLU_006587_2_0_1"/>
<dbReference type="InParanoid" id="Q91V92"/>
<dbReference type="OrthoDB" id="3261737at2759"/>
<dbReference type="BRENDA" id="2.3.3.8">
    <property type="organism ID" value="3474"/>
</dbReference>
<dbReference type="Reactome" id="R-MMU-6798695">
    <property type="pathway name" value="Neutrophil degranulation"/>
</dbReference>
<dbReference type="Reactome" id="R-MMU-75105">
    <property type="pathway name" value="Fatty acyl-CoA biosynthesis"/>
</dbReference>
<dbReference type="BioGRID-ORCS" id="104112">
    <property type="hits" value="20 hits in 82 CRISPR screens"/>
</dbReference>
<dbReference type="CD-CODE" id="CE726F99">
    <property type="entry name" value="Postsynaptic density"/>
</dbReference>
<dbReference type="ChiTaRS" id="Acly">
    <property type="organism name" value="mouse"/>
</dbReference>
<dbReference type="PRO" id="PR:Q91V92"/>
<dbReference type="Proteomes" id="UP000000589">
    <property type="component" value="Chromosome 11"/>
</dbReference>
<dbReference type="RNAct" id="Q91V92">
    <property type="molecule type" value="protein"/>
</dbReference>
<dbReference type="Bgee" id="ENSMUSG00000020917">
    <property type="expression patterns" value="Expressed in facial nucleus and 294 other cell types or tissues"/>
</dbReference>
<dbReference type="ExpressionAtlas" id="Q91V92">
    <property type="expression patterns" value="baseline and differential"/>
</dbReference>
<dbReference type="GO" id="GO:0005829">
    <property type="term" value="C:cytosol"/>
    <property type="evidence" value="ECO:0000314"/>
    <property type="project" value="MGI"/>
</dbReference>
<dbReference type="GO" id="GO:0005739">
    <property type="term" value="C:mitochondrion"/>
    <property type="evidence" value="ECO:0007005"/>
    <property type="project" value="MGI"/>
</dbReference>
<dbReference type="GO" id="GO:0005524">
    <property type="term" value="F:ATP binding"/>
    <property type="evidence" value="ECO:0007669"/>
    <property type="project" value="UniProtKB-KW"/>
</dbReference>
<dbReference type="GO" id="GO:0003878">
    <property type="term" value="F:ATP citrate synthase activity"/>
    <property type="evidence" value="ECO:0000314"/>
    <property type="project" value="UniProtKB"/>
</dbReference>
<dbReference type="GO" id="GO:0046872">
    <property type="term" value="F:metal ion binding"/>
    <property type="evidence" value="ECO:0007669"/>
    <property type="project" value="UniProtKB-KW"/>
</dbReference>
<dbReference type="GO" id="GO:0006085">
    <property type="term" value="P:acetyl-CoA biosynthetic process"/>
    <property type="evidence" value="ECO:0000250"/>
    <property type="project" value="BHF-UCL"/>
</dbReference>
<dbReference type="GO" id="GO:0006101">
    <property type="term" value="P:citrate metabolic process"/>
    <property type="evidence" value="ECO:0000250"/>
    <property type="project" value="BHF-UCL"/>
</dbReference>
<dbReference type="GO" id="GO:0008610">
    <property type="term" value="P:lipid biosynthetic process"/>
    <property type="evidence" value="ECO:0000250"/>
    <property type="project" value="UniProtKB"/>
</dbReference>
<dbReference type="GO" id="GO:0006107">
    <property type="term" value="P:oxaloacetate metabolic process"/>
    <property type="evidence" value="ECO:0000250"/>
    <property type="project" value="BHF-UCL"/>
</dbReference>
<dbReference type="CDD" id="cd06100">
    <property type="entry name" value="CCL_ACL-C"/>
    <property type="match status" value="1"/>
</dbReference>
<dbReference type="FunFam" id="1.10.230.10:FF:000004">
    <property type="entry name" value="ATP-citrate synthase"/>
    <property type="match status" value="1"/>
</dbReference>
<dbReference type="FunFam" id="3.30.470.110:FF:000001">
    <property type="entry name" value="ATP-citrate synthase"/>
    <property type="match status" value="1"/>
</dbReference>
<dbReference type="FunFam" id="3.40.50.261:FF:000003">
    <property type="entry name" value="ATP-citrate synthase subunit"/>
    <property type="match status" value="1"/>
</dbReference>
<dbReference type="FunFam" id="3.40.50.261:FF:000004">
    <property type="entry name" value="ATP-citrate synthase subunit"/>
    <property type="match status" value="1"/>
</dbReference>
<dbReference type="FunFam" id="3.40.50.720:FF:000024">
    <property type="entry name" value="Probable ATP-citrate synthase"/>
    <property type="match status" value="1"/>
</dbReference>
<dbReference type="Gene3D" id="3.30.470.110">
    <property type="match status" value="1"/>
</dbReference>
<dbReference type="Gene3D" id="1.10.580.10">
    <property type="entry name" value="Citrate Synthase, domain 1"/>
    <property type="match status" value="1"/>
</dbReference>
<dbReference type="Gene3D" id="1.10.230.10">
    <property type="entry name" value="Cytochrome P450-Terp, domain 2"/>
    <property type="match status" value="1"/>
</dbReference>
<dbReference type="Gene3D" id="3.40.50.720">
    <property type="entry name" value="NAD(P)-binding Rossmann-like Domain"/>
    <property type="match status" value="1"/>
</dbReference>
<dbReference type="Gene3D" id="3.40.50.261">
    <property type="entry name" value="Succinyl-CoA synthetase domains"/>
    <property type="match status" value="2"/>
</dbReference>
<dbReference type="InterPro" id="IPR014608">
    <property type="entry name" value="ATP-citrate_synthase"/>
</dbReference>
<dbReference type="InterPro" id="IPR017440">
    <property type="entry name" value="Cit_synth/succinyl-CoA_lig_AS"/>
</dbReference>
<dbReference type="InterPro" id="IPR032263">
    <property type="entry name" value="Citrate-bd"/>
</dbReference>
<dbReference type="InterPro" id="IPR016142">
    <property type="entry name" value="Citrate_synth-like_lrg_a-sub"/>
</dbReference>
<dbReference type="InterPro" id="IPR016143">
    <property type="entry name" value="Citrate_synth-like_sm_a-sub"/>
</dbReference>
<dbReference type="InterPro" id="IPR056749">
    <property type="entry name" value="Citrate_synth_N"/>
</dbReference>
<dbReference type="InterPro" id="IPR002020">
    <property type="entry name" value="Citrate_synthase"/>
</dbReference>
<dbReference type="InterPro" id="IPR036969">
    <property type="entry name" value="Citrate_synthase_sf"/>
</dbReference>
<dbReference type="InterPro" id="IPR033847">
    <property type="entry name" value="Citrt_syn/SCS-alpha_CS"/>
</dbReference>
<dbReference type="InterPro" id="IPR003781">
    <property type="entry name" value="CoA-bd"/>
</dbReference>
<dbReference type="InterPro" id="IPR036291">
    <property type="entry name" value="NAD(P)-bd_dom_sf"/>
</dbReference>
<dbReference type="InterPro" id="IPR017866">
    <property type="entry name" value="Succ-CoA_synthase_bsu_CS"/>
</dbReference>
<dbReference type="InterPro" id="IPR005811">
    <property type="entry name" value="SUCC_ACL_C"/>
</dbReference>
<dbReference type="InterPro" id="IPR016102">
    <property type="entry name" value="Succinyl-CoA_synth-like"/>
</dbReference>
<dbReference type="PANTHER" id="PTHR23118">
    <property type="entry name" value="ATP-CITRATE SYNTHASE"/>
    <property type="match status" value="1"/>
</dbReference>
<dbReference type="PANTHER" id="PTHR23118:SF42">
    <property type="entry name" value="ATP-CITRATE SYNTHASE"/>
    <property type="match status" value="1"/>
</dbReference>
<dbReference type="Pfam" id="PF16114">
    <property type="entry name" value="Citrate_bind"/>
    <property type="match status" value="1"/>
</dbReference>
<dbReference type="Pfam" id="PF00285">
    <property type="entry name" value="Citrate_synt"/>
    <property type="match status" value="1"/>
</dbReference>
<dbReference type="Pfam" id="PF24948">
    <property type="entry name" value="Citrate_synth_N"/>
    <property type="match status" value="1"/>
</dbReference>
<dbReference type="Pfam" id="PF02629">
    <property type="entry name" value="CoA_binding"/>
    <property type="match status" value="1"/>
</dbReference>
<dbReference type="Pfam" id="PF00549">
    <property type="entry name" value="Ligase_CoA"/>
    <property type="match status" value="1"/>
</dbReference>
<dbReference type="PIRSF" id="PIRSF036511">
    <property type="entry name" value="ATP_citrt_syn"/>
    <property type="match status" value="1"/>
</dbReference>
<dbReference type="SMART" id="SM00881">
    <property type="entry name" value="CoA_binding"/>
    <property type="match status" value="1"/>
</dbReference>
<dbReference type="SUPFAM" id="SSF48256">
    <property type="entry name" value="Citrate synthase"/>
    <property type="match status" value="1"/>
</dbReference>
<dbReference type="SUPFAM" id="SSF56059">
    <property type="entry name" value="Glutathione synthetase ATP-binding domain-like"/>
    <property type="match status" value="1"/>
</dbReference>
<dbReference type="SUPFAM" id="SSF51735">
    <property type="entry name" value="NAD(P)-binding Rossmann-fold domains"/>
    <property type="match status" value="1"/>
</dbReference>
<dbReference type="SUPFAM" id="SSF52210">
    <property type="entry name" value="Succinyl-CoA synthetase domains"/>
    <property type="match status" value="1"/>
</dbReference>
<dbReference type="PROSITE" id="PS01216">
    <property type="entry name" value="SUCCINYL_COA_LIG_1"/>
    <property type="match status" value="1"/>
</dbReference>
<dbReference type="PROSITE" id="PS00399">
    <property type="entry name" value="SUCCINYL_COA_LIG_2"/>
    <property type="match status" value="1"/>
</dbReference>
<dbReference type="PROSITE" id="PS01217">
    <property type="entry name" value="SUCCINYL_COA_LIG_3"/>
    <property type="match status" value="1"/>
</dbReference>
<feature type="chain" id="PRO_0000102782" description="ATP-citrate synthase">
    <location>
        <begin position="1"/>
        <end position="1091"/>
    </location>
</feature>
<feature type="domain" description="ATP-grasp">
    <location>
        <begin position="4"/>
        <end position="265"/>
    </location>
</feature>
<feature type="region of interest" description="Disordered" evidence="4">
    <location>
        <begin position="442"/>
        <end position="478"/>
    </location>
</feature>
<feature type="compositionally biased region" description="Low complexity" evidence="4">
    <location>
        <begin position="442"/>
        <end position="457"/>
    </location>
</feature>
<feature type="active site" description="Tele-phosphohistidine intermediate" evidence="2">
    <location>
        <position position="750"/>
    </location>
</feature>
<feature type="binding site" evidence="2">
    <location>
        <position position="58"/>
    </location>
    <ligand>
        <name>ATP</name>
        <dbReference type="ChEBI" id="CHEBI:30616"/>
    </ligand>
</feature>
<feature type="binding site" evidence="2">
    <location>
        <position position="66"/>
    </location>
    <ligand>
        <name>ATP</name>
        <dbReference type="ChEBI" id="CHEBI:30616"/>
    </ligand>
</feature>
<feature type="binding site" evidence="2">
    <location>
        <position position="67"/>
    </location>
    <ligand>
        <name>ATP</name>
        <dbReference type="ChEBI" id="CHEBI:30616"/>
    </ligand>
</feature>
<feature type="binding site" evidence="2">
    <location>
        <position position="109"/>
    </location>
    <ligand>
        <name>ATP</name>
        <dbReference type="ChEBI" id="CHEBI:30616"/>
    </ligand>
</feature>
<feature type="binding site" evidence="2">
    <location>
        <position position="111"/>
    </location>
    <ligand>
        <name>ATP</name>
        <dbReference type="ChEBI" id="CHEBI:30616"/>
    </ligand>
</feature>
<feature type="binding site" evidence="2">
    <location>
        <position position="118"/>
    </location>
    <ligand>
        <name>ATP</name>
        <dbReference type="ChEBI" id="CHEBI:30616"/>
    </ligand>
</feature>
<feature type="binding site" evidence="2">
    <location>
        <position position="216"/>
    </location>
    <ligand>
        <name>ATP</name>
        <dbReference type="ChEBI" id="CHEBI:30616"/>
    </ligand>
</feature>
<feature type="binding site" evidence="2">
    <location>
        <position position="257"/>
    </location>
    <ligand>
        <name>Mg(2+)</name>
        <dbReference type="ChEBI" id="CHEBI:18420"/>
    </ligand>
</feature>
<feature type="binding site" evidence="2">
    <location>
        <position position="260"/>
    </location>
    <ligand>
        <name>Mg(2+)</name>
        <dbReference type="ChEBI" id="CHEBI:18420"/>
    </ligand>
</feature>
<feature type="binding site" evidence="2">
    <location>
        <position position="262"/>
    </location>
    <ligand>
        <name>Mg(2+)</name>
        <dbReference type="ChEBI" id="CHEBI:18420"/>
    </ligand>
</feature>
<feature type="binding site" evidence="2">
    <location>
        <position position="309"/>
    </location>
    <ligand>
        <name>citrate</name>
        <dbReference type="ChEBI" id="CHEBI:16947"/>
    </ligand>
</feature>
<feature type="binding site" evidence="2">
    <location>
        <position position="346"/>
    </location>
    <ligand>
        <name>citrate</name>
        <dbReference type="ChEBI" id="CHEBI:16947"/>
    </ligand>
</feature>
<feature type="binding site" evidence="2">
    <location>
        <position position="348"/>
    </location>
    <ligand>
        <name>citrate</name>
        <dbReference type="ChEBI" id="CHEBI:16947"/>
    </ligand>
</feature>
<feature type="binding site" evidence="2">
    <location>
        <position position="364"/>
    </location>
    <ligand>
        <name>citrate</name>
        <dbReference type="ChEBI" id="CHEBI:16947"/>
    </ligand>
</feature>
<feature type="binding site" evidence="2">
    <location>
        <position position="379"/>
    </location>
    <ligand>
        <name>citrate</name>
        <dbReference type="ChEBI" id="CHEBI:16947"/>
    </ligand>
</feature>
<feature type="binding site" evidence="3">
    <location>
        <begin position="769"/>
        <end position="779"/>
    </location>
    <ligand>
        <name>CoA</name>
        <dbReference type="ChEBI" id="CHEBI:57287"/>
    </ligand>
</feature>
<feature type="modified residue" description="Phosphotyrosine" evidence="2">
    <location>
        <position position="131"/>
    </location>
</feature>
<feature type="modified residue" description="Phosphoserine" evidence="13">
    <location>
        <position position="263"/>
    </location>
</feature>
<feature type="modified residue" description="Phosphothreonine" evidence="1">
    <location>
        <position position="447"/>
    </location>
</feature>
<feature type="modified residue" description="Phosphoserine" evidence="1">
    <location>
        <position position="451"/>
    </location>
</feature>
<feature type="modified residue" description="Phosphoserine; by PKA and PKB/AKT1 or PKB/AKT2 or BCKDK" evidence="2 12">
    <location>
        <position position="455"/>
    </location>
</feature>
<feature type="modified residue" description="Phosphoserine" evidence="2">
    <location>
        <position position="459"/>
    </location>
</feature>
<feature type="modified residue" description="N6-acetyllysine; alternate" evidence="2">
    <location>
        <position position="530"/>
    </location>
</feature>
<feature type="modified residue" description="N6-acetyllysine; alternate" evidence="2">
    <location>
        <position position="536"/>
    </location>
</feature>
<feature type="modified residue" description="N6-acetyllysine; alternate" evidence="2">
    <location>
        <position position="544"/>
    </location>
</feature>
<feature type="modified residue" description="Phosphothreonine" evidence="2">
    <location>
        <position position="629"/>
    </location>
</feature>
<feature type="modified residue" description="Phosphoserine" evidence="13">
    <location>
        <position position="653"/>
    </location>
</feature>
<feature type="modified residue" description="Phosphotyrosine" evidence="10 11">
    <location>
        <position position="672"/>
    </location>
</feature>
<feature type="modified residue" description="Phosphoserine" evidence="2">
    <location>
        <position position="829"/>
    </location>
</feature>
<feature type="modified residue" description="N6-acetyllysine" evidence="2">
    <location>
        <position position="938"/>
    </location>
</feature>
<feature type="modified residue" description="N6-acetyllysine" evidence="2">
    <location>
        <position position="958"/>
    </location>
</feature>
<feature type="modified residue" description="N6-acetyllysine" evidence="14">
    <location>
        <position position="968"/>
    </location>
</feature>
<feature type="modified residue" description="N6-acetyllysine" evidence="2">
    <location>
        <position position="1067"/>
    </location>
</feature>
<feature type="modified residue" description="Phosphoserine" evidence="13">
    <location>
        <position position="1090"/>
    </location>
</feature>
<feature type="cross-link" description="Glycyl lysine isopeptide (Lys-Gly) (interchain with G-Cter in ubiquitin); alternate" evidence="7">
    <location>
        <position position="530"/>
    </location>
</feature>
<feature type="cross-link" description="Glycyl lysine isopeptide (Lys-Gly) (interchain with G-Cter in ubiquitin); alternate" evidence="7">
    <location>
        <position position="536"/>
    </location>
</feature>
<feature type="cross-link" description="Glycyl lysine isopeptide (Lys-Gly) (interchain with G-Cter in ubiquitin); alternate" evidence="7">
    <location>
        <position position="544"/>
    </location>
</feature>
<feature type="mutagenesis site" description="Abolished ubiquitination by the BCR(KLHL25)complex, leading to imapired differentiation of inducible regulatory T (iTreg) cells; when associated with R-536 and R-544." evidence="7">
    <original>K</original>
    <variation>R</variation>
    <location>
        <position position="530"/>
    </location>
</feature>
<feature type="mutagenesis site" description="Abolished ubiquitination by the BCR(KLHL25)complex, leading to imapired differentiation of inducible regulatory T (iTreg) cells; when associated with R-530 and R-544." evidence="7">
    <original>K</original>
    <variation>R</variation>
    <location>
        <position position="536"/>
    </location>
</feature>
<feature type="mutagenesis site" description="Abolished ubiquitination by the BCR(KLHL25)complex, leading to imapired differentiation of inducible regulatory T (iTreg) cells; when associated with R-530 and R-536." evidence="7">
    <original>K</original>
    <variation>R</variation>
    <location>
        <position position="544"/>
    </location>
</feature>
<sequence length="1091" mass="119728">MSAKAISEQTGKELLYKYICTTSAIQNRFKYARVTPDTDWAHLLQDHPWLLSQSLVVKPDQLIKRRGKLGLVGVNLSLDGVKSWLKPRLGHEATVGKAKGFLKNFLIEPFVPHSQAEEFYVCIYATREGDYVLFHHEGGVDVGDVDAKAQKLLVGVDEKLNTEDIKRHLLVHAPEDKKEVLASFISGLFNFYEDLYFTYLEINPLVVTKDGVYILDLAAKVDATADYICKVKWGDIEFPPPFGREAYPEEAYIADLDAKSGASLKLTLLNPKGRIWTMVAGGGASVVYSDTICDLGGVNELANYGEYSGAPSEQQTYDYAKTILSLMTREKHPEGKILIIGGSIANFTNVAATFKGIVRAIRDYQGPLKEHEVTIFVRRGGPNYQEGLRVMGEVGKTTGIPIHVFGTETHMTAIVGMALGHRPIPNQPPTAAHTANFLLNASGSTSTPAPSRTASFSESRADEVAPAKKAKPAMPQGKSATLFSRHTKAIVWGMQTRAVQGMLDFDYVCSRDEPSVAAMVYPFTGDHKQKFYWGHKEILIPVFKNMADAMKKHPEVDVLINFASLRSAYDSTMETMNYAQIRTIAIIAEGIPEALTRKLIKKADQKGVTIIGPATVGGIKPGCFKIGNTGGMLDNILASKLYRPGSVAYVSRSGGMSNELNNIISRTTDGVYEGVAIGGDRYPGSTFMDHVLRYQDTPGVKMIVVLGEIGGTEEYKICRGIKEGRLTKPVVCWCIGTCATMFSSEVQFGHAGACANQASETAVAKNQALKEAGVFVPRSFDELGEIIQSVYEDLVAKGAIVPAQEVPPPTVPMDYSWARELGLIRKPASFMTSICDERGQELIYAGMPITEVFKEEMGIGGVLGLLWFQRRLPKYSCQFIEMCLMVTADHGPAVSGAHNTIICARAGKDLVSSLTSGLLTIGDRFGGALDAAAKMFSKAFDSGIIPMEFVNKMKKEGKLIMGIGHRVKSINNPDMRVQILKDFVKQHFPATPLLDYALEVEKITTSKKPNLILNVDGFIGVAFVDMLRNCGSFTREEADEYVDIGALNGIFVLGRSMGFIGHYLDQKRLKQGLYRHPWDDISYVLPEHMSM</sequence>
<reference key="1">
    <citation type="journal article" date="2001" name="Mamm. Genome">
        <title>High-throughput sequence identification of gene coding variants within alcohol-related QTLs.</title>
        <authorList>
            <person name="Ehringer M.A."/>
            <person name="Thompson J."/>
            <person name="Conroy O."/>
            <person name="Xu Y."/>
            <person name="Yang F."/>
            <person name="Canniff J."/>
            <person name="Beeson M."/>
            <person name="Gordon L."/>
            <person name="Bennett B."/>
            <person name="Johnson T.E."/>
            <person name="Sikela J.M."/>
        </authorList>
    </citation>
    <scope>NUCLEOTIDE SEQUENCE [MRNA]</scope>
    <source>
        <strain>ILS</strain>
        <strain>ISS</strain>
    </source>
</reference>
<reference key="2">
    <citation type="journal article" date="2004" name="Genome Res.">
        <title>The status, quality, and expansion of the NIH full-length cDNA project: the Mammalian Gene Collection (MGC).</title>
        <authorList>
            <consortium name="The MGC Project Team"/>
        </authorList>
    </citation>
    <scope>NUCLEOTIDE SEQUENCE [LARGE SCALE MRNA]</scope>
    <source>
        <strain>C57BL/6J</strain>
        <tissue>Brain</tissue>
    </source>
</reference>
<reference key="3">
    <citation type="journal article" date="2005" name="Biochem. Biophys. Res. Commun.">
        <title>Proteomic identification of proteins conjugated to ISG15 in mouse and human cells.</title>
        <authorList>
            <person name="Giannakopoulos N.V."/>
            <person name="Luo J.K."/>
            <person name="Papov V."/>
            <person name="Zou W."/>
            <person name="Lenschow D.J."/>
            <person name="Jacobs B.S."/>
            <person name="Borden E.C."/>
            <person name="Li J."/>
            <person name="Virgin H.W."/>
            <person name="Zhang D.E."/>
        </authorList>
    </citation>
    <scope>ISGYLATION</scope>
</reference>
<reference key="4">
    <citation type="journal article" date="2007" name="J. Immunol.">
        <title>Quantitative time-resolved phosphoproteomic analysis of mast cell signaling.</title>
        <authorList>
            <person name="Cao L."/>
            <person name="Yu K."/>
            <person name="Banh C."/>
            <person name="Nguyen V."/>
            <person name="Ritz A."/>
            <person name="Raphael B.J."/>
            <person name="Kawakami Y."/>
            <person name="Kawakami T."/>
            <person name="Salomon A.R."/>
        </authorList>
    </citation>
    <scope>PHOSPHORYLATION [LARGE SCALE ANALYSIS] AT TYR-672</scope>
    <scope>IDENTIFICATION BY MASS SPECTROMETRY [LARGE SCALE ANALYSIS]</scope>
    <source>
        <tissue>Mast cell</tissue>
    </source>
</reference>
<reference key="5">
    <citation type="journal article" date="2008" name="J. Proteome Res.">
        <title>Large-scale identification and evolution indexing of tyrosine phosphorylation sites from murine brain.</title>
        <authorList>
            <person name="Ballif B.A."/>
            <person name="Carey G.R."/>
            <person name="Sunyaev S.R."/>
            <person name="Gygi S.P."/>
        </authorList>
    </citation>
    <scope>PHOSPHORYLATION [LARGE SCALE ANALYSIS] AT TYR-672</scope>
    <scope>IDENTIFICATION BY MASS SPECTROMETRY [LARGE SCALE ANALYSIS]</scope>
    <source>
        <tissue>Brain</tissue>
    </source>
</reference>
<reference key="6">
    <citation type="journal article" date="2009" name="Mol. Cell. Proteomics">
        <title>Large scale localization of protein phosphorylation by use of electron capture dissociation mass spectrometry.</title>
        <authorList>
            <person name="Sweet S.M."/>
            <person name="Bailey C.M."/>
            <person name="Cunningham D.L."/>
            <person name="Heath J.K."/>
            <person name="Cooper H.J."/>
        </authorList>
    </citation>
    <scope>PHOSPHORYLATION [LARGE SCALE ANALYSIS] AT SER-455</scope>
    <scope>IDENTIFICATION BY MASS SPECTROMETRY [LARGE SCALE ANALYSIS]</scope>
    <source>
        <tissue>Embryonic fibroblast</tissue>
    </source>
</reference>
<reference key="7">
    <citation type="journal article" date="2010" name="Cell">
        <title>A tissue-specific atlas of mouse protein phosphorylation and expression.</title>
        <authorList>
            <person name="Huttlin E.L."/>
            <person name="Jedrychowski M.P."/>
            <person name="Elias J.E."/>
            <person name="Goswami T."/>
            <person name="Rad R."/>
            <person name="Beausoleil S.A."/>
            <person name="Villen J."/>
            <person name="Haas W."/>
            <person name="Sowa M.E."/>
            <person name="Gygi S.P."/>
        </authorList>
    </citation>
    <scope>PHOSPHORYLATION [LARGE SCALE ANALYSIS] AT SER-263; SER-653 AND SER-1090</scope>
    <scope>IDENTIFICATION BY MASS SPECTROMETRY [LARGE SCALE ANALYSIS]</scope>
    <source>
        <tissue>Brain</tissue>
        <tissue>Brown adipose tissue</tissue>
        <tissue>Heart</tissue>
        <tissue>Kidney</tissue>
        <tissue>Liver</tissue>
        <tissue>Lung</tissue>
        <tissue>Pancreas</tissue>
        <tissue>Spleen</tissue>
        <tissue>Testis</tissue>
    </source>
</reference>
<reference key="8">
    <citation type="journal article" date="2013" name="Mol. Cell">
        <title>SIRT5-mediated lysine desuccinylation impacts diverse metabolic pathways.</title>
        <authorList>
            <person name="Park J."/>
            <person name="Chen Y."/>
            <person name="Tishkoff D.X."/>
            <person name="Peng C."/>
            <person name="Tan M."/>
            <person name="Dai L."/>
            <person name="Xie Z."/>
            <person name="Zhang Y."/>
            <person name="Zwaans B.M."/>
            <person name="Skinner M.E."/>
            <person name="Lombard D.B."/>
            <person name="Zhao Y."/>
        </authorList>
    </citation>
    <scope>ACETYLATION [LARGE SCALE ANALYSIS] AT LYS-968</scope>
    <scope>IDENTIFICATION BY MASS SPECTROMETRY [LARGE SCALE ANALYSIS]</scope>
    <source>
        <tissue>Embryonic fibroblast</tissue>
    </source>
</reference>
<reference key="9">
    <citation type="journal article" date="2014" name="J. Biotechnol.">
        <title>Enhanced lipid accumulation in the yeast Yarrowia lipolytica by over-expression of ATP:citrate lyase from Mus musculus.</title>
        <authorList>
            <person name="Zhang H."/>
            <person name="Zhang L."/>
            <person name="Chen H."/>
            <person name="Chen Y.Q."/>
            <person name="Chen W."/>
            <person name="Song Y."/>
            <person name="Ratledge C."/>
        </authorList>
    </citation>
    <scope>FUNCTION</scope>
    <scope>CATALYTIC ACTIVITY</scope>
</reference>
<reference key="10">
    <citation type="journal article" date="2021" name="Elife">
        <title>ACLY ubiquitination by CUL3-KLHL25 induces the reprogramming of fatty acid metabolism to facilitate iTreg differentiation.</title>
        <authorList>
            <person name="Tian M."/>
            <person name="Hao F."/>
            <person name="Jin X."/>
            <person name="Sun X."/>
            <person name="Jiang Y."/>
            <person name="Wang Y."/>
            <person name="Li D."/>
            <person name="Chang T."/>
            <person name="Zou Y."/>
            <person name="Peng P."/>
            <person name="Xia C."/>
            <person name="Liu J."/>
            <person name="Li Y."/>
            <person name="Wang P."/>
            <person name="Feng Y."/>
            <person name="Wei M."/>
        </authorList>
    </citation>
    <scope>UBIQUITINATION AT LYS-530; LYS-536 AND LYS-544</scope>
    <scope>MUTAGENESIS OF LYS-530; LYS-536 AND LYS-544</scope>
</reference>
<proteinExistence type="evidence at protein level"/>
<accession>Q91V92</accession>
<comment type="function">
    <text evidence="6">Catalyzes the cleavage of citrate into oxaloacetate and acetyl-CoA, the latter serving as common substrate in multiple biochemical reactions in protein, carbohydrate and lipid metabolism.</text>
</comment>
<comment type="catalytic activity">
    <reaction evidence="6">
        <text>oxaloacetate + acetyl-CoA + ADP + phosphate = citrate + ATP + CoA</text>
        <dbReference type="Rhea" id="RHEA:21160"/>
        <dbReference type="ChEBI" id="CHEBI:16452"/>
        <dbReference type="ChEBI" id="CHEBI:16947"/>
        <dbReference type="ChEBI" id="CHEBI:30616"/>
        <dbReference type="ChEBI" id="CHEBI:43474"/>
        <dbReference type="ChEBI" id="CHEBI:57287"/>
        <dbReference type="ChEBI" id="CHEBI:57288"/>
        <dbReference type="ChEBI" id="CHEBI:456216"/>
        <dbReference type="EC" id="2.3.3.8"/>
    </reaction>
    <physiologicalReaction direction="right-to-left" evidence="9">
        <dbReference type="Rhea" id="RHEA:21162"/>
    </physiologicalReaction>
</comment>
<comment type="cofactor">
    <cofactor evidence="2">
        <name>Mg(2+)</name>
        <dbReference type="ChEBI" id="CHEBI:18420"/>
    </cofactor>
</comment>
<comment type="activity regulation">
    <text evidence="2">Phosphorylation results in activation of its activity (By similarity). Glucose 6-phosphate, fructose 6-phosphate, fructose 2,6-bisphosphate, ribulose 5-phosphate, and fructose 1,6-bisphosphate also act as activators (By similarity).</text>
</comment>
<comment type="subunit">
    <text evidence="2">Homotetramer.</text>
</comment>
<comment type="interaction">
    <interactant intactId="EBI-644049">
        <id>Q91V92</id>
    </interactant>
    <interactant intactId="EBI-643822">
        <id>Q8CFN5-4</id>
        <label>Mef2c</label>
    </interactant>
    <organismsDiffer>false</organismsDiffer>
    <experiments>3</experiments>
</comment>
<comment type="subcellular location">
    <subcellularLocation>
        <location evidence="2">Cytoplasm</location>
        <location evidence="2">Cytosol</location>
    </subcellularLocation>
</comment>
<comment type="PTM">
    <text evidence="1 2">Phosphorylated by PKA and GSK3 in a sequential manner; phosphorylation results in activation of its activity (By similarity). Phosphorylation on Thr-447 and Ser-451 depends on the phosphorylation state of Ser-455 (By similarity). Phosphorylation on Ser-455 is decreased by prior phosphorylation on the other 2 residues (By similarity). Phosphorylated at Ser-455 by BCKDK and dephosphorylated by protein phosphatase PPM1K.</text>
</comment>
<comment type="PTM">
    <text evidence="5">ISGylated.</text>
</comment>
<comment type="PTM">
    <text evidence="2">Acetylated at Lys-530, Lys-536 and Lys-544 by KAT2B/PCAF (By similarity). Acetylation is promoted by glucose and stabilizes the protein, probably by preventing ubiquitination at the same sites (By similarity). Acetylation promotes de novo lipid synthesis (By similarity). Deacetylated by SIRT2 (By similarity).</text>
</comment>
<comment type="PTM">
    <text evidence="2 7">Ubiquitinated at Lys-530, Lys-536 and Lys-544 by the BCR(KLHL25) E3 ubiquitin ligase complex and UBR4, leading to its degradation (PubMed:34491895). Ubiquitination is probably inhibited by acetylation at same site (By similarity). BCR(KLHL25)-mediated degradation of ACLY promotes fatty acid oxidation and is required for differentiation of inducible regulatory T (iTreg) cells (PubMed:34491895).</text>
</comment>
<comment type="similarity">
    <text evidence="8">In the N-terminal section; belongs to the succinate/malate CoA ligase beta subunit family.</text>
</comment>
<comment type="similarity">
    <text evidence="8">In the C-terminal section; belongs to the succinate/malate CoA ligase alpha subunit family.</text>
</comment>
<protein>
    <recommendedName>
        <fullName>ATP-citrate synthase</fullName>
        <ecNumber evidence="6">2.3.3.8</ecNumber>
    </recommendedName>
    <alternativeName>
        <fullName>ATP-citrate (pro-S-)-lyase</fullName>
    </alternativeName>
    <alternativeName>
        <fullName>Citrate cleavage enzyme</fullName>
    </alternativeName>
</protein>
<organism>
    <name type="scientific">Mus musculus</name>
    <name type="common">Mouse</name>
    <dbReference type="NCBI Taxonomy" id="10090"/>
    <lineage>
        <taxon>Eukaryota</taxon>
        <taxon>Metazoa</taxon>
        <taxon>Chordata</taxon>
        <taxon>Craniata</taxon>
        <taxon>Vertebrata</taxon>
        <taxon>Euteleostomi</taxon>
        <taxon>Mammalia</taxon>
        <taxon>Eutheria</taxon>
        <taxon>Euarchontoglires</taxon>
        <taxon>Glires</taxon>
        <taxon>Rodentia</taxon>
        <taxon>Myomorpha</taxon>
        <taxon>Muroidea</taxon>
        <taxon>Muridae</taxon>
        <taxon>Murinae</taxon>
        <taxon>Mus</taxon>
        <taxon>Mus</taxon>
    </lineage>
</organism>
<evidence type="ECO:0000250" key="1">
    <source>
        <dbReference type="UniProtKB" id="P16638"/>
    </source>
</evidence>
<evidence type="ECO:0000250" key="2">
    <source>
        <dbReference type="UniProtKB" id="P53396"/>
    </source>
</evidence>
<evidence type="ECO:0000255" key="3"/>
<evidence type="ECO:0000256" key="4">
    <source>
        <dbReference type="SAM" id="MobiDB-lite"/>
    </source>
</evidence>
<evidence type="ECO:0000269" key="5">
    <source>
    </source>
</evidence>
<evidence type="ECO:0000269" key="6">
    <source>
    </source>
</evidence>
<evidence type="ECO:0000269" key="7">
    <source>
    </source>
</evidence>
<evidence type="ECO:0000305" key="8"/>
<evidence type="ECO:0000305" key="9">
    <source>
    </source>
</evidence>
<evidence type="ECO:0007744" key="10">
    <source>
    </source>
</evidence>
<evidence type="ECO:0007744" key="11">
    <source>
    </source>
</evidence>
<evidence type="ECO:0007744" key="12">
    <source>
    </source>
</evidence>
<evidence type="ECO:0007744" key="13">
    <source>
    </source>
</evidence>
<evidence type="ECO:0007744" key="14">
    <source>
    </source>
</evidence>
<keyword id="KW-0007">Acetylation</keyword>
<keyword id="KW-0067">ATP-binding</keyword>
<keyword id="KW-0963">Cytoplasm</keyword>
<keyword id="KW-1017">Isopeptide bond</keyword>
<keyword id="KW-0444">Lipid biosynthesis</keyword>
<keyword id="KW-0443">Lipid metabolism</keyword>
<keyword id="KW-0460">Magnesium</keyword>
<keyword id="KW-0479">Metal-binding</keyword>
<keyword id="KW-0547">Nucleotide-binding</keyword>
<keyword id="KW-0597">Phosphoprotein</keyword>
<keyword id="KW-1185">Reference proteome</keyword>
<keyword id="KW-0808">Transferase</keyword>
<keyword id="KW-0832">Ubl conjugation</keyword>
<name>ACLY_MOUSE</name>